<gene>
    <name type="ordered locus">Rcas_2411</name>
</gene>
<organism>
    <name type="scientific">Roseiflexus castenholzii (strain DSM 13941 / HLO8)</name>
    <dbReference type="NCBI Taxonomy" id="383372"/>
    <lineage>
        <taxon>Bacteria</taxon>
        <taxon>Bacillati</taxon>
        <taxon>Chloroflexota</taxon>
        <taxon>Chloroflexia</taxon>
        <taxon>Chloroflexales</taxon>
        <taxon>Roseiflexineae</taxon>
        <taxon>Roseiflexaceae</taxon>
        <taxon>Roseiflexus</taxon>
    </lineage>
</organism>
<comment type="catalytic activity">
    <reaction evidence="1">
        <text>acetaldehyde + NAD(+) + CoA = acetyl-CoA + NADH + H(+)</text>
        <dbReference type="Rhea" id="RHEA:23288"/>
        <dbReference type="ChEBI" id="CHEBI:15343"/>
        <dbReference type="ChEBI" id="CHEBI:15378"/>
        <dbReference type="ChEBI" id="CHEBI:57287"/>
        <dbReference type="ChEBI" id="CHEBI:57288"/>
        <dbReference type="ChEBI" id="CHEBI:57540"/>
        <dbReference type="ChEBI" id="CHEBI:57945"/>
        <dbReference type="EC" id="1.2.1.10"/>
    </reaction>
</comment>
<comment type="similarity">
    <text evidence="1">Belongs to the acetaldehyde dehydrogenase family.</text>
</comment>
<proteinExistence type="inferred from homology"/>
<evidence type="ECO:0000255" key="1">
    <source>
        <dbReference type="HAMAP-Rule" id="MF_01657"/>
    </source>
</evidence>
<protein>
    <recommendedName>
        <fullName evidence="1">Acetaldehyde dehydrogenase</fullName>
        <ecNumber evidence="1">1.2.1.10</ecNumber>
    </recommendedName>
    <alternativeName>
        <fullName evidence="1">Acetaldehyde dehydrogenase [acetylating]</fullName>
    </alternativeName>
</protein>
<feature type="chain" id="PRO_0000387734" description="Acetaldehyde dehydrogenase">
    <location>
        <begin position="1"/>
        <end position="305"/>
    </location>
</feature>
<feature type="active site" description="Acyl-thioester intermediate" evidence="1">
    <location>
        <position position="128"/>
    </location>
</feature>
<feature type="binding site" evidence="1">
    <location>
        <begin position="13"/>
        <end position="16"/>
    </location>
    <ligand>
        <name>NAD(+)</name>
        <dbReference type="ChEBI" id="CHEBI:57540"/>
    </ligand>
</feature>
<feature type="binding site" evidence="1">
    <location>
        <begin position="159"/>
        <end position="167"/>
    </location>
    <ligand>
        <name>NAD(+)</name>
        <dbReference type="ChEBI" id="CHEBI:57540"/>
    </ligand>
</feature>
<feature type="binding site" evidence="1">
    <location>
        <position position="278"/>
    </location>
    <ligand>
        <name>NAD(+)</name>
        <dbReference type="ChEBI" id="CHEBI:57540"/>
    </ligand>
</feature>
<reference key="1">
    <citation type="submission" date="2007-08" db="EMBL/GenBank/DDBJ databases">
        <title>Complete sequence of Roseiflexus castenholzii DSM 13941.</title>
        <authorList>
            <consortium name="US DOE Joint Genome Institute"/>
            <person name="Copeland A."/>
            <person name="Lucas S."/>
            <person name="Lapidus A."/>
            <person name="Barry K."/>
            <person name="Glavina del Rio T."/>
            <person name="Dalin E."/>
            <person name="Tice H."/>
            <person name="Pitluck S."/>
            <person name="Thompson L.S."/>
            <person name="Brettin T."/>
            <person name="Bruce D."/>
            <person name="Detter J.C."/>
            <person name="Han C."/>
            <person name="Tapia R."/>
            <person name="Schmutz J."/>
            <person name="Larimer F."/>
            <person name="Land M."/>
            <person name="Hauser L."/>
            <person name="Kyrpides N."/>
            <person name="Mikhailova N."/>
            <person name="Bryant D.A."/>
            <person name="Hanada S."/>
            <person name="Tsukatani Y."/>
            <person name="Richardson P."/>
        </authorList>
    </citation>
    <scope>NUCLEOTIDE SEQUENCE [LARGE SCALE GENOMIC DNA]</scope>
    <source>
        <strain>DSM 13941 / HLO8</strain>
    </source>
</reference>
<sequence length="305" mass="32687">MGDETIKVAILGSGNIGTDLMYKLLDCPASMELVLLAGIDPNSEGLARARALGVAASAQGIDAVLEHPDIQIVFDATSAKAHVRHAKLLRETGRTAIDLTPAARGPYVVPPVNLRQHLDAPNVNLITCGGQATIPLVYAVSRVTPVRYAEIVSTVASRSAGPGTRQNIDEFTFTTAHGLEVIGGAQQGKAIIILNPAEPPILMRNTVYALPEDDFDPAQVRDSIEAMVAEVQQYVPGYRLKNPPVFDMRDTPWGRKSAVTVLLEVEGAGHFLPTYAGNLDIMTASARRVGDVFARHLLSRREVAV</sequence>
<name>ACDH_ROSCS</name>
<dbReference type="EC" id="1.2.1.10" evidence="1"/>
<dbReference type="EMBL" id="CP000804">
    <property type="protein sequence ID" value="ABU58491.1"/>
    <property type="molecule type" value="Genomic_DNA"/>
</dbReference>
<dbReference type="RefSeq" id="WP_012120915.1">
    <property type="nucleotide sequence ID" value="NC_009767.1"/>
</dbReference>
<dbReference type="SMR" id="A7NLU3"/>
<dbReference type="STRING" id="383372.Rcas_2411"/>
<dbReference type="KEGG" id="rca:Rcas_2411"/>
<dbReference type="eggNOG" id="COG4569">
    <property type="taxonomic scope" value="Bacteria"/>
</dbReference>
<dbReference type="HOGENOM" id="CLU_062208_0_0_0"/>
<dbReference type="OrthoDB" id="9783105at2"/>
<dbReference type="Proteomes" id="UP000000263">
    <property type="component" value="Chromosome"/>
</dbReference>
<dbReference type="GO" id="GO:0008774">
    <property type="term" value="F:acetaldehyde dehydrogenase (acetylating) activity"/>
    <property type="evidence" value="ECO:0007669"/>
    <property type="project" value="UniProtKB-UniRule"/>
</dbReference>
<dbReference type="GO" id="GO:0051287">
    <property type="term" value="F:NAD binding"/>
    <property type="evidence" value="ECO:0007669"/>
    <property type="project" value="UniProtKB-UniRule"/>
</dbReference>
<dbReference type="GO" id="GO:0009056">
    <property type="term" value="P:catabolic process"/>
    <property type="evidence" value="ECO:0007669"/>
    <property type="project" value="UniProtKB-KW"/>
</dbReference>
<dbReference type="CDD" id="cd23933">
    <property type="entry name" value="ALDH_C"/>
    <property type="match status" value="1"/>
</dbReference>
<dbReference type="Gene3D" id="3.30.360.10">
    <property type="entry name" value="Dihydrodipicolinate Reductase, domain 2"/>
    <property type="match status" value="1"/>
</dbReference>
<dbReference type="Gene3D" id="3.40.50.720">
    <property type="entry name" value="NAD(P)-binding Rossmann-like Domain"/>
    <property type="match status" value="1"/>
</dbReference>
<dbReference type="HAMAP" id="MF_01657">
    <property type="entry name" value="Ac_ald_DH_ac"/>
    <property type="match status" value="1"/>
</dbReference>
<dbReference type="InterPro" id="IPR003361">
    <property type="entry name" value="Acetaldehyde_dehydrogenase"/>
</dbReference>
<dbReference type="InterPro" id="IPR015426">
    <property type="entry name" value="Acetylaldehyde_DH_C"/>
</dbReference>
<dbReference type="InterPro" id="IPR036291">
    <property type="entry name" value="NAD(P)-bd_dom_sf"/>
</dbReference>
<dbReference type="InterPro" id="IPR000534">
    <property type="entry name" value="Semialdehyde_DH_NAD-bd"/>
</dbReference>
<dbReference type="NCBIfam" id="TIGR03215">
    <property type="entry name" value="ac_ald_DH_ac"/>
    <property type="match status" value="1"/>
</dbReference>
<dbReference type="NCBIfam" id="NF006157">
    <property type="entry name" value="PRK08300.1"/>
    <property type="match status" value="1"/>
</dbReference>
<dbReference type="Pfam" id="PF09290">
    <property type="entry name" value="AcetDehyd-dimer"/>
    <property type="match status" value="1"/>
</dbReference>
<dbReference type="Pfam" id="PF01118">
    <property type="entry name" value="Semialdhyde_dh"/>
    <property type="match status" value="1"/>
</dbReference>
<dbReference type="PIRSF" id="PIRSF015689">
    <property type="entry name" value="Actaldh_dh_actl"/>
    <property type="match status" value="1"/>
</dbReference>
<dbReference type="SMART" id="SM00859">
    <property type="entry name" value="Semialdhyde_dh"/>
    <property type="match status" value="1"/>
</dbReference>
<dbReference type="SUPFAM" id="SSF55347">
    <property type="entry name" value="Glyceraldehyde-3-phosphate dehydrogenase-like, C-terminal domain"/>
    <property type="match status" value="1"/>
</dbReference>
<dbReference type="SUPFAM" id="SSF51735">
    <property type="entry name" value="NAD(P)-binding Rossmann-fold domains"/>
    <property type="match status" value="1"/>
</dbReference>
<keyword id="KW-0058">Aromatic hydrocarbons catabolism</keyword>
<keyword id="KW-0520">NAD</keyword>
<keyword id="KW-0560">Oxidoreductase</keyword>
<keyword id="KW-1185">Reference proteome</keyword>
<accession>A7NLU3</accession>